<accession>A5U003</accession>
<sequence>MTVSYGAPGRVNLIGEHTDYNLGFALPIALPRRTVVTFTPEHTGAITARSDRADGSARIPLDTTPGQVTGWAAYAAGAIWALRGAGHPVPGGAMSITSDVEIGSGLSSSAALIGAVLGAVGAATGTRIDRLERARLAQRAENDYVGAPTGLLDHLAALFGAPKTALLIDFRDITVRPVAFDPDACDVVLLLMDSRARHCHAGGEYALRRASCERAAADLGVSSLRAVQDRGLAALGAIADPIDARRARHVLTENQRVLDFAAALADSDFTAAGQLLTASHESMREDFAITTERIDLIAESAVRAGALGARMTGGGFGGAVIALVPADRARDVADTVRRAAVTAGYDEPAVSRTYAAPGAAECR</sequence>
<organism>
    <name type="scientific">Mycobacterium tuberculosis (strain ATCC 25177 / H37Ra)</name>
    <dbReference type="NCBI Taxonomy" id="419947"/>
    <lineage>
        <taxon>Bacteria</taxon>
        <taxon>Bacillati</taxon>
        <taxon>Actinomycetota</taxon>
        <taxon>Actinomycetes</taxon>
        <taxon>Mycobacteriales</taxon>
        <taxon>Mycobacteriaceae</taxon>
        <taxon>Mycobacterium</taxon>
        <taxon>Mycobacterium tuberculosis complex</taxon>
    </lineage>
</organism>
<evidence type="ECO:0000255" key="1">
    <source>
        <dbReference type="HAMAP-Rule" id="MF_00246"/>
    </source>
</evidence>
<name>GAL1_MYCTA</name>
<feature type="chain" id="PRO_1000005758" description="Galactokinase">
    <location>
        <begin position="1"/>
        <end position="363"/>
    </location>
</feature>
<feature type="active site" description="Proton acceptor" evidence="1">
    <location>
        <position position="153"/>
    </location>
</feature>
<feature type="binding site" evidence="1">
    <location>
        <begin position="16"/>
        <end position="19"/>
    </location>
    <ligand>
        <name>substrate</name>
    </ligand>
</feature>
<feature type="binding site" evidence="1">
    <location>
        <position position="50"/>
    </location>
    <ligand>
        <name>ATP</name>
        <dbReference type="ChEBI" id="CHEBI:30616"/>
    </ligand>
</feature>
<feature type="binding site" evidence="1">
    <location>
        <begin position="103"/>
        <end position="109"/>
    </location>
    <ligand>
        <name>ATP</name>
        <dbReference type="ChEBI" id="CHEBI:30616"/>
    </ligand>
</feature>
<feature type="binding site" evidence="1">
    <location>
        <position position="109"/>
    </location>
    <ligand>
        <name>Mg(2+)</name>
        <dbReference type="ChEBI" id="CHEBI:18420"/>
    </ligand>
</feature>
<feature type="binding site" evidence="1">
    <location>
        <position position="141"/>
    </location>
    <ligand>
        <name>Mg(2+)</name>
        <dbReference type="ChEBI" id="CHEBI:18420"/>
    </ligand>
</feature>
<feature type="binding site" evidence="1">
    <location>
        <position position="205"/>
    </location>
    <ligand>
        <name>substrate</name>
    </ligand>
</feature>
<feature type="site" description="Transition state stabilizer" evidence="1">
    <location>
        <position position="10"/>
    </location>
</feature>
<keyword id="KW-0067">ATP-binding</keyword>
<keyword id="KW-0119">Carbohydrate metabolism</keyword>
<keyword id="KW-0963">Cytoplasm</keyword>
<keyword id="KW-0299">Galactose metabolism</keyword>
<keyword id="KW-0418">Kinase</keyword>
<keyword id="KW-0460">Magnesium</keyword>
<keyword id="KW-0479">Metal-binding</keyword>
<keyword id="KW-0547">Nucleotide-binding</keyword>
<keyword id="KW-1185">Reference proteome</keyword>
<keyword id="KW-0808">Transferase</keyword>
<reference key="1">
    <citation type="journal article" date="2008" name="PLoS ONE">
        <title>Genetic basis of virulence attenuation revealed by comparative genomic analysis of Mycobacterium tuberculosis strain H37Ra versus H37Rv.</title>
        <authorList>
            <person name="Zheng H."/>
            <person name="Lu L."/>
            <person name="Wang B."/>
            <person name="Pu S."/>
            <person name="Zhang X."/>
            <person name="Zhu G."/>
            <person name="Shi W."/>
            <person name="Zhang L."/>
            <person name="Wang H."/>
            <person name="Wang S."/>
            <person name="Zhao G."/>
            <person name="Zhang Y."/>
        </authorList>
    </citation>
    <scope>NUCLEOTIDE SEQUENCE [LARGE SCALE GENOMIC DNA]</scope>
    <source>
        <strain>ATCC 25177 / H37Ra</strain>
    </source>
</reference>
<gene>
    <name evidence="1" type="primary">galK</name>
    <name type="ordered locus">MRA_0629</name>
</gene>
<comment type="function">
    <text evidence="1">Catalyzes the transfer of the gamma-phosphate of ATP to D-galactose to form alpha-D-galactose-1-phosphate (Gal-1-P).</text>
</comment>
<comment type="catalytic activity">
    <reaction evidence="1">
        <text>alpha-D-galactose + ATP = alpha-D-galactose 1-phosphate + ADP + H(+)</text>
        <dbReference type="Rhea" id="RHEA:13553"/>
        <dbReference type="ChEBI" id="CHEBI:15378"/>
        <dbReference type="ChEBI" id="CHEBI:28061"/>
        <dbReference type="ChEBI" id="CHEBI:30616"/>
        <dbReference type="ChEBI" id="CHEBI:58336"/>
        <dbReference type="ChEBI" id="CHEBI:456216"/>
        <dbReference type="EC" id="2.7.1.6"/>
    </reaction>
</comment>
<comment type="pathway">
    <text evidence="1">Carbohydrate metabolism; galactose metabolism.</text>
</comment>
<comment type="subcellular location">
    <subcellularLocation>
        <location evidence="1">Cytoplasm</location>
    </subcellularLocation>
</comment>
<comment type="similarity">
    <text evidence="1">Belongs to the GHMP kinase family. GalK subfamily.</text>
</comment>
<dbReference type="EC" id="2.7.1.6" evidence="1"/>
<dbReference type="EMBL" id="CP000611">
    <property type="protein sequence ID" value="ABQ72353.1"/>
    <property type="molecule type" value="Genomic_DNA"/>
</dbReference>
<dbReference type="RefSeq" id="WP_003906403.1">
    <property type="nucleotide sequence ID" value="NZ_CP016972.1"/>
</dbReference>
<dbReference type="SMR" id="A5U003"/>
<dbReference type="KEGG" id="mra:MRA_0629"/>
<dbReference type="eggNOG" id="COG0153">
    <property type="taxonomic scope" value="Bacteria"/>
</dbReference>
<dbReference type="HOGENOM" id="CLU_017814_2_1_11"/>
<dbReference type="UniPathway" id="UPA00214"/>
<dbReference type="Proteomes" id="UP000001988">
    <property type="component" value="Chromosome"/>
</dbReference>
<dbReference type="GO" id="GO:0005829">
    <property type="term" value="C:cytosol"/>
    <property type="evidence" value="ECO:0007669"/>
    <property type="project" value="TreeGrafter"/>
</dbReference>
<dbReference type="GO" id="GO:0005524">
    <property type="term" value="F:ATP binding"/>
    <property type="evidence" value="ECO:0007669"/>
    <property type="project" value="UniProtKB-UniRule"/>
</dbReference>
<dbReference type="GO" id="GO:0004335">
    <property type="term" value="F:galactokinase activity"/>
    <property type="evidence" value="ECO:0007669"/>
    <property type="project" value="UniProtKB-UniRule"/>
</dbReference>
<dbReference type="GO" id="GO:0000287">
    <property type="term" value="F:magnesium ion binding"/>
    <property type="evidence" value="ECO:0007669"/>
    <property type="project" value="UniProtKB-UniRule"/>
</dbReference>
<dbReference type="GO" id="GO:0006012">
    <property type="term" value="P:galactose metabolic process"/>
    <property type="evidence" value="ECO:0007669"/>
    <property type="project" value="UniProtKB-UniRule"/>
</dbReference>
<dbReference type="FunFam" id="3.30.70.890:FF:000001">
    <property type="entry name" value="Galactokinase"/>
    <property type="match status" value="1"/>
</dbReference>
<dbReference type="Gene3D" id="3.30.230.10">
    <property type="match status" value="1"/>
</dbReference>
<dbReference type="Gene3D" id="3.30.70.890">
    <property type="entry name" value="GHMP kinase, C-terminal domain"/>
    <property type="match status" value="1"/>
</dbReference>
<dbReference type="HAMAP" id="MF_00246">
    <property type="entry name" value="Galactokinase"/>
    <property type="match status" value="1"/>
</dbReference>
<dbReference type="InterPro" id="IPR000705">
    <property type="entry name" value="Galactokinase"/>
</dbReference>
<dbReference type="InterPro" id="IPR022963">
    <property type="entry name" value="Galactokinase_bac"/>
</dbReference>
<dbReference type="InterPro" id="IPR019741">
    <property type="entry name" value="Galactokinase_CS"/>
</dbReference>
<dbReference type="InterPro" id="IPR019539">
    <property type="entry name" value="GalKase_N"/>
</dbReference>
<dbReference type="InterPro" id="IPR013750">
    <property type="entry name" value="GHMP_kinase_C_dom"/>
</dbReference>
<dbReference type="InterPro" id="IPR036554">
    <property type="entry name" value="GHMP_kinase_C_sf"/>
</dbReference>
<dbReference type="InterPro" id="IPR006204">
    <property type="entry name" value="GHMP_kinase_N_dom"/>
</dbReference>
<dbReference type="InterPro" id="IPR006206">
    <property type="entry name" value="Mevalonate/galactokinase"/>
</dbReference>
<dbReference type="InterPro" id="IPR020568">
    <property type="entry name" value="Ribosomal_Su5_D2-typ_SF"/>
</dbReference>
<dbReference type="InterPro" id="IPR014721">
    <property type="entry name" value="Ribsml_uS5_D2-typ_fold_subgr"/>
</dbReference>
<dbReference type="NCBIfam" id="TIGR00131">
    <property type="entry name" value="gal_kin"/>
    <property type="match status" value="1"/>
</dbReference>
<dbReference type="NCBIfam" id="NF001816">
    <property type="entry name" value="PRK00555.1"/>
    <property type="match status" value="1"/>
</dbReference>
<dbReference type="PANTHER" id="PTHR10457:SF7">
    <property type="entry name" value="GALACTOKINASE-RELATED"/>
    <property type="match status" value="1"/>
</dbReference>
<dbReference type="PANTHER" id="PTHR10457">
    <property type="entry name" value="MEVALONATE KINASE/GALACTOKINASE"/>
    <property type="match status" value="1"/>
</dbReference>
<dbReference type="Pfam" id="PF10509">
    <property type="entry name" value="GalKase_gal_bdg"/>
    <property type="match status" value="1"/>
</dbReference>
<dbReference type="Pfam" id="PF08544">
    <property type="entry name" value="GHMP_kinases_C"/>
    <property type="match status" value="1"/>
</dbReference>
<dbReference type="Pfam" id="PF00288">
    <property type="entry name" value="GHMP_kinases_N"/>
    <property type="match status" value="1"/>
</dbReference>
<dbReference type="PIRSF" id="PIRSF000530">
    <property type="entry name" value="Galactokinase"/>
    <property type="match status" value="1"/>
</dbReference>
<dbReference type="PRINTS" id="PR00473">
    <property type="entry name" value="GALCTOKINASE"/>
</dbReference>
<dbReference type="PRINTS" id="PR00959">
    <property type="entry name" value="MEVGALKINASE"/>
</dbReference>
<dbReference type="SUPFAM" id="SSF55060">
    <property type="entry name" value="GHMP Kinase, C-terminal domain"/>
    <property type="match status" value="1"/>
</dbReference>
<dbReference type="SUPFAM" id="SSF54211">
    <property type="entry name" value="Ribosomal protein S5 domain 2-like"/>
    <property type="match status" value="1"/>
</dbReference>
<dbReference type="PROSITE" id="PS00106">
    <property type="entry name" value="GALACTOKINASE"/>
    <property type="match status" value="1"/>
</dbReference>
<protein>
    <recommendedName>
        <fullName evidence="1">Galactokinase</fullName>
        <ecNumber evidence="1">2.7.1.6</ecNumber>
    </recommendedName>
    <alternativeName>
        <fullName evidence="1">Galactose kinase</fullName>
    </alternativeName>
</protein>
<proteinExistence type="inferred from homology"/>